<organism>
    <name type="scientific">Oryza sativa subsp. japonica</name>
    <name type="common">Rice</name>
    <dbReference type="NCBI Taxonomy" id="39947"/>
    <lineage>
        <taxon>Eukaryota</taxon>
        <taxon>Viridiplantae</taxon>
        <taxon>Streptophyta</taxon>
        <taxon>Embryophyta</taxon>
        <taxon>Tracheophyta</taxon>
        <taxon>Spermatophyta</taxon>
        <taxon>Magnoliopsida</taxon>
        <taxon>Liliopsida</taxon>
        <taxon>Poales</taxon>
        <taxon>Poaceae</taxon>
        <taxon>BOP clade</taxon>
        <taxon>Oryzoideae</taxon>
        <taxon>Oryzeae</taxon>
        <taxon>Oryzinae</taxon>
        <taxon>Oryza</taxon>
        <taxon>Oryza sativa</taxon>
    </lineage>
</organism>
<name>HD3A_ORYSJ</name>
<dbReference type="EMBL" id="AB052942">
    <property type="protein sequence ID" value="BAB61028.1"/>
    <property type="molecule type" value="Genomic_DNA"/>
</dbReference>
<dbReference type="EMBL" id="AB052944">
    <property type="protein sequence ID" value="BAB61030.1"/>
    <property type="molecule type" value="mRNA"/>
</dbReference>
<dbReference type="EMBL" id="AB433508">
    <property type="protein sequence ID" value="BAG72285.1"/>
    <property type="molecule type" value="Genomic_DNA"/>
</dbReference>
<dbReference type="EMBL" id="AB433509">
    <property type="protein sequence ID" value="BAG72286.1"/>
    <property type="molecule type" value="Genomic_DNA"/>
</dbReference>
<dbReference type="EMBL" id="AB426880">
    <property type="protein sequence ID" value="BAH30243.1"/>
    <property type="molecule type" value="Genomic_DNA"/>
</dbReference>
<dbReference type="EMBL" id="AB426883">
    <property type="protein sequence ID" value="BAH30246.1"/>
    <property type="molecule type" value="Genomic_DNA"/>
</dbReference>
<dbReference type="EMBL" id="AP005828">
    <property type="protein sequence ID" value="BAC21280.1"/>
    <property type="molecule type" value="Genomic_DNA"/>
</dbReference>
<dbReference type="EMBL" id="AP007223">
    <property type="protein sequence ID" value="BAD69431.1"/>
    <property type="molecule type" value="Genomic_DNA"/>
</dbReference>
<dbReference type="EMBL" id="AP008212">
    <property type="protein sequence ID" value="BAF18774.1"/>
    <property type="molecule type" value="Genomic_DNA"/>
</dbReference>
<dbReference type="EMBL" id="AP014962">
    <property type="protein sequence ID" value="BAS96252.1"/>
    <property type="molecule type" value="Genomic_DNA"/>
</dbReference>
<dbReference type="EMBL" id="CM000143">
    <property type="protein sequence ID" value="EAZ35889.1"/>
    <property type="molecule type" value="Genomic_DNA"/>
</dbReference>
<dbReference type="RefSeq" id="XP_015641951.1">
    <property type="nucleotide sequence ID" value="XM_015786465.1"/>
</dbReference>
<dbReference type="PDB" id="3AXY">
    <property type="method" value="X-ray"/>
    <property type="resolution" value="2.40 A"/>
    <property type="chains" value="A/B/G/H=6-170"/>
</dbReference>
<dbReference type="PDBsum" id="3AXY"/>
<dbReference type="BMRB" id="Q93WI9"/>
<dbReference type="SMR" id="Q93WI9"/>
<dbReference type="BioGRID" id="809222">
    <property type="interactions" value="2"/>
</dbReference>
<dbReference type="FunCoup" id="Q93WI9">
    <property type="interactions" value="1161"/>
</dbReference>
<dbReference type="STRING" id="39947.Q93WI9"/>
<dbReference type="PaxDb" id="39947-Q93WI9"/>
<dbReference type="EnsemblPlants" id="Os06t0157700-01">
    <property type="protein sequence ID" value="Os06t0157700-01"/>
    <property type="gene ID" value="Os06g0157700"/>
</dbReference>
<dbReference type="Gramene" id="Os06t0157700-01">
    <property type="protein sequence ID" value="Os06t0157700-01"/>
    <property type="gene ID" value="Os06g0157700"/>
</dbReference>
<dbReference type="KEGG" id="dosa:Os06g0157700"/>
<dbReference type="eggNOG" id="KOG3346">
    <property type="taxonomic scope" value="Eukaryota"/>
</dbReference>
<dbReference type="HOGENOM" id="CLU_043994_6_1_1"/>
<dbReference type="InParanoid" id="Q93WI9"/>
<dbReference type="OMA" id="FSTSKFM"/>
<dbReference type="OrthoDB" id="2506647at2759"/>
<dbReference type="PlantReactome" id="R-OSA-8934036">
    <property type="pathway name" value="Long day regulated expression of florigens"/>
</dbReference>
<dbReference type="PlantReactome" id="R-OSA-8934108">
    <property type="pathway name" value="Short day regulated expression of florigens"/>
</dbReference>
<dbReference type="PlantReactome" id="R-OSA-9609102">
    <property type="pathway name" value="Flower development"/>
</dbReference>
<dbReference type="EvolutionaryTrace" id="Q93WI9"/>
<dbReference type="Proteomes" id="UP000000763">
    <property type="component" value="Chromosome 6"/>
</dbReference>
<dbReference type="Proteomes" id="UP000007752">
    <property type="component" value="Chromosome 6"/>
</dbReference>
<dbReference type="Proteomes" id="UP000059680">
    <property type="component" value="Chromosome 6"/>
</dbReference>
<dbReference type="ExpressionAtlas" id="Q93WI9">
    <property type="expression patterns" value="baseline and differential"/>
</dbReference>
<dbReference type="GO" id="GO:0005737">
    <property type="term" value="C:cytoplasm"/>
    <property type="evidence" value="ECO:0007669"/>
    <property type="project" value="UniProtKB-SubCell"/>
</dbReference>
<dbReference type="GO" id="GO:0005634">
    <property type="term" value="C:nucleus"/>
    <property type="evidence" value="ECO:0007669"/>
    <property type="project" value="UniProtKB-SubCell"/>
</dbReference>
<dbReference type="GO" id="GO:0008429">
    <property type="term" value="F:phosphatidylethanolamine binding"/>
    <property type="evidence" value="ECO:0000250"/>
    <property type="project" value="Gramene"/>
</dbReference>
<dbReference type="GO" id="GO:0030154">
    <property type="term" value="P:cell differentiation"/>
    <property type="evidence" value="ECO:0007669"/>
    <property type="project" value="UniProtKB-KW"/>
</dbReference>
<dbReference type="GO" id="GO:0009908">
    <property type="term" value="P:flower development"/>
    <property type="evidence" value="ECO:0007669"/>
    <property type="project" value="UniProtKB-KW"/>
</dbReference>
<dbReference type="GO" id="GO:0010229">
    <property type="term" value="P:inflorescence development"/>
    <property type="evidence" value="ECO:0000315"/>
    <property type="project" value="UniProtKB"/>
</dbReference>
<dbReference type="GO" id="GO:0009909">
    <property type="term" value="P:regulation of flower development"/>
    <property type="evidence" value="ECO:0000315"/>
    <property type="project" value="UniProtKB"/>
</dbReference>
<dbReference type="GO" id="GO:0048510">
    <property type="term" value="P:regulation of timing of transition from vegetative to reproductive phase"/>
    <property type="evidence" value="ECO:0000315"/>
    <property type="project" value="UniProtKB"/>
</dbReference>
<dbReference type="GO" id="GO:0048572">
    <property type="term" value="P:short-day photoperiodism"/>
    <property type="evidence" value="ECO:0000315"/>
    <property type="project" value="Gramene"/>
</dbReference>
<dbReference type="GO" id="GO:0048575">
    <property type="term" value="P:short-day photoperiodism, flowering"/>
    <property type="evidence" value="ECO:0000315"/>
    <property type="project" value="UniProtKB"/>
</dbReference>
<dbReference type="GO" id="GO:0010228">
    <property type="term" value="P:vegetative to reproductive phase transition of meristem"/>
    <property type="evidence" value="ECO:0000318"/>
    <property type="project" value="GO_Central"/>
</dbReference>
<dbReference type="CDD" id="cd00866">
    <property type="entry name" value="PEBP_euk"/>
    <property type="match status" value="1"/>
</dbReference>
<dbReference type="FunFam" id="3.90.280.10:FF:000001">
    <property type="entry name" value="Terminal flower 1"/>
    <property type="match status" value="1"/>
</dbReference>
<dbReference type="Gene3D" id="3.90.280.10">
    <property type="entry name" value="PEBP-like"/>
    <property type="match status" value="1"/>
</dbReference>
<dbReference type="InterPro" id="IPR008914">
    <property type="entry name" value="PEBP"/>
</dbReference>
<dbReference type="InterPro" id="IPR036610">
    <property type="entry name" value="PEBP-like_sf"/>
</dbReference>
<dbReference type="InterPro" id="IPR035810">
    <property type="entry name" value="PEBP_euk"/>
</dbReference>
<dbReference type="InterPro" id="IPR001858">
    <property type="entry name" value="Phosphatidylethanolamine-bd_CS"/>
</dbReference>
<dbReference type="PANTHER" id="PTHR11362">
    <property type="entry name" value="PHOSPHATIDYLETHANOLAMINE-BINDING PROTEIN"/>
    <property type="match status" value="1"/>
</dbReference>
<dbReference type="PANTHER" id="PTHR11362:SF9">
    <property type="entry name" value="PROTEIN FLOWERING LOCUS T-RELATED"/>
    <property type="match status" value="1"/>
</dbReference>
<dbReference type="Pfam" id="PF01161">
    <property type="entry name" value="PBP"/>
    <property type="match status" value="1"/>
</dbReference>
<dbReference type="SUPFAM" id="SSF49777">
    <property type="entry name" value="PEBP-like"/>
    <property type="match status" value="1"/>
</dbReference>
<dbReference type="PROSITE" id="PS01220">
    <property type="entry name" value="PBP"/>
    <property type="match status" value="1"/>
</dbReference>
<sequence>MAGSGRDRDPLVVGRVVGDVLDAFVRSTNLKVTYGSKTVSNGCELKPSMVTHQPRVEVGGNDMRTFYTLVMVDPDAPSPSDPNLREYLHWLVTDIPGTTAASFGQEVMCYESPRPTMGIHRLVFVLFQQLGRQTVYAPGWRQNFNTKDFAELYNLGSPVAAVYFNCQREAGSGGRRVYP</sequence>
<comment type="function">
    <text evidence="1 2 3 4">Probable mobile flower-promoting signal (florigen) that moves from the leaf to the shoot apical meristem (SAM) and induces flowering. Promotes the transition from vegetative growth to flowering downstream of HD1 and EHD1 under short day (SD) conditions. Acts upstream of MADS14 and MADS15.</text>
</comment>
<comment type="subcellular location">
    <subcellularLocation>
        <location evidence="5">Cytoplasm</location>
    </subcellularLocation>
    <subcellularLocation>
        <location evidence="5">Nucleus</location>
    </subcellularLocation>
</comment>
<comment type="tissue specificity">
    <text evidence="2">Expressed in the inner region of the SAM, stem and leaf blade vascular tissues (at protein level).</text>
</comment>
<comment type="induction">
    <text evidence="2">Expressed with a circadian rhythm showing a peak at dawn and then decreasing to reach the lowest levels early in the night in SD conditions.</text>
</comment>
<comment type="similarity">
    <text evidence="5">Belongs to the phosphatidylethanolamine-binding protein family.</text>
</comment>
<evidence type="ECO:0000269" key="1">
    <source>
    </source>
</evidence>
<evidence type="ECO:0000269" key="2">
    <source>
    </source>
</evidence>
<evidence type="ECO:0000269" key="3">
    <source>
    </source>
</evidence>
<evidence type="ECO:0000269" key="4">
    <source>
    </source>
</evidence>
<evidence type="ECO:0000305" key="5"/>
<evidence type="ECO:0007829" key="6">
    <source>
        <dbReference type="PDB" id="3AXY"/>
    </source>
</evidence>
<gene>
    <name type="primary">HD3A</name>
    <name type="ordered locus">Os06g0157700</name>
    <name type="ordered locus">LOC_Os06g06320</name>
    <name type="ORF">OsJ_20191</name>
    <name type="ORF">P0046E09.30</name>
    <name type="ORF">P0702F05.10</name>
</gene>
<protein>
    <recommendedName>
        <fullName>Protein HEADING DATE 3A</fullName>
    </recommendedName>
    <alternativeName>
        <fullName>FT-like protein A</fullName>
    </alternativeName>
</protein>
<keyword id="KW-0002">3D-structure</keyword>
<keyword id="KW-0963">Cytoplasm</keyword>
<keyword id="KW-0217">Developmental protein</keyword>
<keyword id="KW-0221">Differentiation</keyword>
<keyword id="KW-0287">Flowering</keyword>
<keyword id="KW-0539">Nucleus</keyword>
<keyword id="KW-1185">Reference proteome</keyword>
<reference key="1">
    <citation type="journal article" date="2002" name="Plant Cell Physiol.">
        <title>Hd3a, a rice ortholog of the Arabidopsis FT gene, promotes transition to flowering downstream of Hd1 under short-day conditions.</title>
        <authorList>
            <person name="Kojima S."/>
            <person name="Takahashi Y."/>
            <person name="Kobayashi Y."/>
            <person name="Monna L."/>
            <person name="Sasaki T."/>
            <person name="Araki T."/>
            <person name="Yano M."/>
        </authorList>
    </citation>
    <scope>NUCLEOTIDE SEQUENCE [GENOMIC DNA / MRNA]</scope>
    <scope>FUNCTION</scope>
    <source>
        <strain>cv. Nipponbare</strain>
    </source>
</reference>
<reference key="2">
    <citation type="journal article" date="2008" name="Genetics">
        <title>The evolution of sex-independent transmission ratio distortion involving multiple allelic interactions at a single locus in rice.</title>
        <authorList>
            <person name="Koide Y."/>
            <person name="Ikenaga M."/>
            <person name="Sawamura N."/>
            <person name="Nishimoto D."/>
            <person name="Matsubara K."/>
            <person name="Onishi K."/>
            <person name="Kanazawa A."/>
            <person name="Sano Y."/>
        </authorList>
    </citation>
    <scope>NUCLEOTIDE SEQUENCE [GENOMIC DNA]</scope>
    <source>
        <strain>cv. Koshihikari</strain>
    </source>
</reference>
<reference key="3">
    <citation type="journal article" date="2009" name="Mol. Ecol.">
        <title>Diversification in flowering time due to tandem FT-like gene duplication, generating novel Mendelian factors in wild and cultivated rice.</title>
        <authorList>
            <person name="Hagiwara W.E."/>
            <person name="Uwatoko N."/>
            <person name="Sasaki A."/>
            <person name="Matsubara K."/>
            <person name="Nagano H."/>
            <person name="Onishi K."/>
            <person name="Sano Y."/>
        </authorList>
    </citation>
    <scope>NUCLEOTIDE SEQUENCE [GENOMIC DNA]</scope>
    <source>
        <strain>cv. Taichung 65</strain>
    </source>
</reference>
<reference key="4">
    <citation type="journal article" date="2005" name="Nature">
        <title>The map-based sequence of the rice genome.</title>
        <authorList>
            <consortium name="International rice genome sequencing project (IRGSP)"/>
        </authorList>
    </citation>
    <scope>NUCLEOTIDE SEQUENCE [LARGE SCALE GENOMIC DNA]</scope>
    <source>
        <strain>cv. Nipponbare</strain>
    </source>
</reference>
<reference key="5">
    <citation type="journal article" date="2008" name="Nucleic Acids Res.">
        <title>The rice annotation project database (RAP-DB): 2008 update.</title>
        <authorList>
            <consortium name="The rice annotation project (RAP)"/>
        </authorList>
    </citation>
    <scope>GENOME REANNOTATION</scope>
    <source>
        <strain>cv. Nipponbare</strain>
    </source>
</reference>
<reference key="6">
    <citation type="journal article" date="2013" name="Rice">
        <title>Improvement of the Oryza sativa Nipponbare reference genome using next generation sequence and optical map data.</title>
        <authorList>
            <person name="Kawahara Y."/>
            <person name="de la Bastide M."/>
            <person name="Hamilton J.P."/>
            <person name="Kanamori H."/>
            <person name="McCombie W.R."/>
            <person name="Ouyang S."/>
            <person name="Schwartz D.C."/>
            <person name="Tanaka T."/>
            <person name="Wu J."/>
            <person name="Zhou S."/>
            <person name="Childs K.L."/>
            <person name="Davidson R.M."/>
            <person name="Lin H."/>
            <person name="Quesada-Ocampo L."/>
            <person name="Vaillancourt B."/>
            <person name="Sakai H."/>
            <person name="Lee S.S."/>
            <person name="Kim J."/>
            <person name="Numa H."/>
            <person name="Itoh T."/>
            <person name="Buell C.R."/>
            <person name="Matsumoto T."/>
        </authorList>
    </citation>
    <scope>GENOME REANNOTATION</scope>
    <source>
        <strain>cv. Nipponbare</strain>
    </source>
</reference>
<reference key="7">
    <citation type="journal article" date="2005" name="PLoS Biol.">
        <title>The genomes of Oryza sativa: a history of duplications.</title>
        <authorList>
            <person name="Yu J."/>
            <person name="Wang J."/>
            <person name="Lin W."/>
            <person name="Li S."/>
            <person name="Li H."/>
            <person name="Zhou J."/>
            <person name="Ni P."/>
            <person name="Dong W."/>
            <person name="Hu S."/>
            <person name="Zeng C."/>
            <person name="Zhang J."/>
            <person name="Zhang Y."/>
            <person name="Li R."/>
            <person name="Xu Z."/>
            <person name="Li S."/>
            <person name="Li X."/>
            <person name="Zheng H."/>
            <person name="Cong L."/>
            <person name="Lin L."/>
            <person name="Yin J."/>
            <person name="Geng J."/>
            <person name="Li G."/>
            <person name="Shi J."/>
            <person name="Liu J."/>
            <person name="Lv H."/>
            <person name="Li J."/>
            <person name="Wang J."/>
            <person name="Deng Y."/>
            <person name="Ran L."/>
            <person name="Shi X."/>
            <person name="Wang X."/>
            <person name="Wu Q."/>
            <person name="Li C."/>
            <person name="Ren X."/>
            <person name="Wang J."/>
            <person name="Wang X."/>
            <person name="Li D."/>
            <person name="Liu D."/>
            <person name="Zhang X."/>
            <person name="Ji Z."/>
            <person name="Zhao W."/>
            <person name="Sun Y."/>
            <person name="Zhang Z."/>
            <person name="Bao J."/>
            <person name="Han Y."/>
            <person name="Dong L."/>
            <person name="Ji J."/>
            <person name="Chen P."/>
            <person name="Wu S."/>
            <person name="Liu J."/>
            <person name="Xiao Y."/>
            <person name="Bu D."/>
            <person name="Tan J."/>
            <person name="Yang L."/>
            <person name="Ye C."/>
            <person name="Zhang J."/>
            <person name="Xu J."/>
            <person name="Zhou Y."/>
            <person name="Yu Y."/>
            <person name="Zhang B."/>
            <person name="Zhuang S."/>
            <person name="Wei H."/>
            <person name="Liu B."/>
            <person name="Lei M."/>
            <person name="Yu H."/>
            <person name="Li Y."/>
            <person name="Xu H."/>
            <person name="Wei S."/>
            <person name="He X."/>
            <person name="Fang L."/>
            <person name="Zhang Z."/>
            <person name="Zhang Y."/>
            <person name="Huang X."/>
            <person name="Su Z."/>
            <person name="Tong W."/>
            <person name="Li J."/>
            <person name="Tong Z."/>
            <person name="Li S."/>
            <person name="Ye J."/>
            <person name="Wang L."/>
            <person name="Fang L."/>
            <person name="Lei T."/>
            <person name="Chen C.-S."/>
            <person name="Chen H.-C."/>
            <person name="Xu Z."/>
            <person name="Li H."/>
            <person name="Huang H."/>
            <person name="Zhang F."/>
            <person name="Xu H."/>
            <person name="Li N."/>
            <person name="Zhao C."/>
            <person name="Li S."/>
            <person name="Dong L."/>
            <person name="Huang Y."/>
            <person name="Li L."/>
            <person name="Xi Y."/>
            <person name="Qi Q."/>
            <person name="Li W."/>
            <person name="Zhang B."/>
            <person name="Hu W."/>
            <person name="Zhang Y."/>
            <person name="Tian X."/>
            <person name="Jiao Y."/>
            <person name="Liang X."/>
            <person name="Jin J."/>
            <person name="Gao L."/>
            <person name="Zheng W."/>
            <person name="Hao B."/>
            <person name="Liu S.-M."/>
            <person name="Wang W."/>
            <person name="Yuan L."/>
            <person name="Cao M."/>
            <person name="McDermott J."/>
            <person name="Samudrala R."/>
            <person name="Wang J."/>
            <person name="Wong G.K.-S."/>
            <person name="Yang H."/>
        </authorList>
    </citation>
    <scope>NUCLEOTIDE SEQUENCE [LARGE SCALE GENOMIC DNA]</scope>
    <source>
        <strain>cv. Nipponbare</strain>
    </source>
</reference>
<reference key="8">
    <citation type="journal article" date="2007" name="Science">
        <title>Hd3a protein is a mobile flowering signal in rice.</title>
        <authorList>
            <person name="Tamaki S."/>
            <person name="Matsuo S."/>
            <person name="Wong H.L."/>
            <person name="Yokoi S."/>
            <person name="Shimamoto K."/>
        </authorList>
    </citation>
    <scope>FUNCTION</scope>
    <scope>TISSUE SPECIFICITY</scope>
    <scope>INDUCTION</scope>
</reference>
<reference key="9">
    <citation type="journal article" date="2008" name="Development">
        <title>Hd3a and RFT1 are essential for flowering in rice.</title>
        <authorList>
            <person name="Komiya R."/>
            <person name="Ikegami A."/>
            <person name="Tamaki S."/>
            <person name="Yokoi S."/>
            <person name="Shimamoto K."/>
        </authorList>
    </citation>
    <scope>FUNCTION</scope>
</reference>
<reference key="10">
    <citation type="journal article" date="2009" name="Development">
        <title>A gene network for long-day flowering activates RFT1 encoding a mobile flowering signal in rice.</title>
        <authorList>
            <person name="Komiya R."/>
            <person name="Yokoi S."/>
            <person name="Shimamoto K."/>
        </authorList>
    </citation>
    <scope>FUNCTION</scope>
</reference>
<proteinExistence type="evidence at protein level"/>
<feature type="chain" id="PRO_0000395304" description="Protein HEADING DATE 3A">
    <location>
        <begin position="1"/>
        <end position="179"/>
    </location>
</feature>
<feature type="sequence conflict" description="In Ref. 2; BAG72286/BAG72285." evidence="5" ref="2">
    <original>N</original>
    <variation>K</variation>
    <location>
        <position position="145"/>
    </location>
</feature>
<feature type="helix" evidence="6">
    <location>
        <begin position="10"/>
        <end position="13"/>
    </location>
</feature>
<feature type="helix" evidence="6">
    <location>
        <begin position="16"/>
        <end position="19"/>
    </location>
</feature>
<feature type="strand" evidence="6">
    <location>
        <begin position="30"/>
        <end position="34"/>
    </location>
</feature>
<feature type="helix" evidence="6">
    <location>
        <begin position="47"/>
        <end position="49"/>
    </location>
</feature>
<feature type="strand" evidence="6">
    <location>
        <begin position="50"/>
        <end position="52"/>
    </location>
</feature>
<feature type="strand" evidence="6">
    <location>
        <begin position="55"/>
        <end position="58"/>
    </location>
</feature>
<feature type="strand" evidence="6">
    <location>
        <begin position="66"/>
        <end position="73"/>
    </location>
</feature>
<feature type="strand" evidence="6">
    <location>
        <begin position="86"/>
        <end position="96"/>
    </location>
</feature>
<feature type="helix" evidence="6">
    <location>
        <begin position="101"/>
        <end position="103"/>
    </location>
</feature>
<feature type="strand" evidence="6">
    <location>
        <begin position="104"/>
        <end position="108"/>
    </location>
</feature>
<feature type="strand" evidence="6">
    <location>
        <begin position="120"/>
        <end position="128"/>
    </location>
</feature>
<feature type="helix" evidence="6">
    <location>
        <begin position="146"/>
        <end position="152"/>
    </location>
</feature>
<feature type="strand" evidence="6">
    <location>
        <begin position="159"/>
        <end position="166"/>
    </location>
</feature>
<accession>Q93WI9</accession>
<accession>B5UA60</accession>
<accession>Q8H2G1</accession>